<proteinExistence type="inferred from homology"/>
<organism>
    <name type="scientific">Streptococcus pyogenes serotype M6 (strain ATCC BAA-946 / MGAS10394)</name>
    <dbReference type="NCBI Taxonomy" id="286636"/>
    <lineage>
        <taxon>Bacteria</taxon>
        <taxon>Bacillati</taxon>
        <taxon>Bacillota</taxon>
        <taxon>Bacilli</taxon>
        <taxon>Lactobacillales</taxon>
        <taxon>Streptococcaceae</taxon>
        <taxon>Streptococcus</taxon>
    </lineage>
</organism>
<sequence length="452" mass="48713">MKVISNFQNKKILILGLAKSGEAAAKLLTKLGALVTVNDSKPFDQNPAAQALLEEGIKVICGSHPVELLDENFEYMVKNPGIPYDNPMVKRALAKEIPILTEVELAYFVSEAPIIGITGSNGKTTTTTMIADVLNAGGQSALLSGNIGYPASKVVQKAIAGDTLVMELSSFQLVGVNAFRPHIAVITNLMPTHLDYHGSFEDYVAAKWMIQAQMTESDYLILNANQEISATLAKTTKATVIPFSTQKVVDGAYLNDGILYFKEQAIIAATDLGVPGSHNIENALATIAVAKLSGIADDIIAQCLSHFGGVKHRLQRVGQIKDITFYNDSKSTNILATQKALSGFDNSRLILIAGGLDRGNEFDDLVPDLLGLKQMIILGESAERMKRAANKAEVSYLEARNVAEATELAFKLAQTGDTILLSPANASWDMYPNFEVRGDEFLATFDCLRGDA</sequence>
<reference key="1">
    <citation type="journal article" date="2004" name="J. Infect. Dis.">
        <title>Progress toward characterization of the group A Streptococcus metagenome: complete genome sequence of a macrolide-resistant serotype M6 strain.</title>
        <authorList>
            <person name="Banks D.J."/>
            <person name="Porcella S.F."/>
            <person name="Barbian K.D."/>
            <person name="Beres S.B."/>
            <person name="Philips L.E."/>
            <person name="Voyich J.M."/>
            <person name="DeLeo F.R."/>
            <person name="Martin J.M."/>
            <person name="Somerville G.A."/>
            <person name="Musser J.M."/>
        </authorList>
    </citation>
    <scope>NUCLEOTIDE SEQUENCE [LARGE SCALE GENOMIC DNA]</scope>
    <source>
        <strain>ATCC BAA-946 / MGAS10394</strain>
    </source>
</reference>
<feature type="chain" id="PRO_0000109102" description="UDP-N-acetylmuramoylalanine--D-glutamate ligase">
    <location>
        <begin position="1"/>
        <end position="452"/>
    </location>
</feature>
<feature type="binding site" evidence="1">
    <location>
        <begin position="119"/>
        <end position="125"/>
    </location>
    <ligand>
        <name>ATP</name>
        <dbReference type="ChEBI" id="CHEBI:30616"/>
    </ligand>
</feature>
<keyword id="KW-0067">ATP-binding</keyword>
<keyword id="KW-0131">Cell cycle</keyword>
<keyword id="KW-0132">Cell division</keyword>
<keyword id="KW-0133">Cell shape</keyword>
<keyword id="KW-0961">Cell wall biogenesis/degradation</keyword>
<keyword id="KW-0963">Cytoplasm</keyword>
<keyword id="KW-0436">Ligase</keyword>
<keyword id="KW-0547">Nucleotide-binding</keyword>
<keyword id="KW-0573">Peptidoglycan synthesis</keyword>
<comment type="function">
    <text evidence="1">Cell wall formation. Catalyzes the addition of glutamate to the nucleotide precursor UDP-N-acetylmuramoyl-L-alanine (UMA).</text>
</comment>
<comment type="catalytic activity">
    <reaction evidence="1">
        <text>UDP-N-acetyl-alpha-D-muramoyl-L-alanine + D-glutamate + ATP = UDP-N-acetyl-alpha-D-muramoyl-L-alanyl-D-glutamate + ADP + phosphate + H(+)</text>
        <dbReference type="Rhea" id="RHEA:16429"/>
        <dbReference type="ChEBI" id="CHEBI:15378"/>
        <dbReference type="ChEBI" id="CHEBI:29986"/>
        <dbReference type="ChEBI" id="CHEBI:30616"/>
        <dbReference type="ChEBI" id="CHEBI:43474"/>
        <dbReference type="ChEBI" id="CHEBI:83898"/>
        <dbReference type="ChEBI" id="CHEBI:83900"/>
        <dbReference type="ChEBI" id="CHEBI:456216"/>
        <dbReference type="EC" id="6.3.2.9"/>
    </reaction>
</comment>
<comment type="pathway">
    <text evidence="1">Cell wall biogenesis; peptidoglycan biosynthesis.</text>
</comment>
<comment type="subcellular location">
    <subcellularLocation>
        <location evidence="1">Cytoplasm</location>
    </subcellularLocation>
</comment>
<comment type="similarity">
    <text evidence="1">Belongs to the MurCDEF family.</text>
</comment>
<gene>
    <name evidence="1" type="primary">murD</name>
    <name type="ordered locus">M6_Spy1274</name>
</gene>
<evidence type="ECO:0000255" key="1">
    <source>
        <dbReference type="HAMAP-Rule" id="MF_00639"/>
    </source>
</evidence>
<accession>Q5XB04</accession>
<dbReference type="EC" id="6.3.2.9" evidence="1"/>
<dbReference type="EMBL" id="CP000003">
    <property type="protein sequence ID" value="AAT87409.1"/>
    <property type="molecule type" value="Genomic_DNA"/>
</dbReference>
<dbReference type="RefSeq" id="WP_002995890.1">
    <property type="nucleotide sequence ID" value="NC_006086.1"/>
</dbReference>
<dbReference type="SMR" id="Q5XB04"/>
<dbReference type="KEGG" id="spa:M6_Spy1274"/>
<dbReference type="HOGENOM" id="CLU_032540_0_1_9"/>
<dbReference type="UniPathway" id="UPA00219"/>
<dbReference type="Proteomes" id="UP000001167">
    <property type="component" value="Chromosome"/>
</dbReference>
<dbReference type="GO" id="GO:0005737">
    <property type="term" value="C:cytoplasm"/>
    <property type="evidence" value="ECO:0007669"/>
    <property type="project" value="UniProtKB-SubCell"/>
</dbReference>
<dbReference type="GO" id="GO:0005524">
    <property type="term" value="F:ATP binding"/>
    <property type="evidence" value="ECO:0007669"/>
    <property type="project" value="UniProtKB-UniRule"/>
</dbReference>
<dbReference type="GO" id="GO:0008764">
    <property type="term" value="F:UDP-N-acetylmuramoylalanine-D-glutamate ligase activity"/>
    <property type="evidence" value="ECO:0007669"/>
    <property type="project" value="UniProtKB-UniRule"/>
</dbReference>
<dbReference type="GO" id="GO:0051301">
    <property type="term" value="P:cell division"/>
    <property type="evidence" value="ECO:0007669"/>
    <property type="project" value="UniProtKB-KW"/>
</dbReference>
<dbReference type="GO" id="GO:0071555">
    <property type="term" value="P:cell wall organization"/>
    <property type="evidence" value="ECO:0007669"/>
    <property type="project" value="UniProtKB-KW"/>
</dbReference>
<dbReference type="GO" id="GO:0009252">
    <property type="term" value="P:peptidoglycan biosynthetic process"/>
    <property type="evidence" value="ECO:0007669"/>
    <property type="project" value="UniProtKB-UniRule"/>
</dbReference>
<dbReference type="GO" id="GO:0008360">
    <property type="term" value="P:regulation of cell shape"/>
    <property type="evidence" value="ECO:0007669"/>
    <property type="project" value="UniProtKB-KW"/>
</dbReference>
<dbReference type="Gene3D" id="3.90.190.20">
    <property type="entry name" value="Mur ligase, C-terminal domain"/>
    <property type="match status" value="1"/>
</dbReference>
<dbReference type="Gene3D" id="3.40.1190.10">
    <property type="entry name" value="Mur-like, catalytic domain"/>
    <property type="match status" value="1"/>
</dbReference>
<dbReference type="Gene3D" id="3.40.50.720">
    <property type="entry name" value="NAD(P)-binding Rossmann-like Domain"/>
    <property type="match status" value="1"/>
</dbReference>
<dbReference type="HAMAP" id="MF_00639">
    <property type="entry name" value="MurD"/>
    <property type="match status" value="1"/>
</dbReference>
<dbReference type="InterPro" id="IPR036565">
    <property type="entry name" value="Mur-like_cat_sf"/>
</dbReference>
<dbReference type="InterPro" id="IPR004101">
    <property type="entry name" value="Mur_ligase_C"/>
</dbReference>
<dbReference type="InterPro" id="IPR036615">
    <property type="entry name" value="Mur_ligase_C_dom_sf"/>
</dbReference>
<dbReference type="InterPro" id="IPR013221">
    <property type="entry name" value="Mur_ligase_cen"/>
</dbReference>
<dbReference type="InterPro" id="IPR005762">
    <property type="entry name" value="MurD"/>
</dbReference>
<dbReference type="NCBIfam" id="TIGR01087">
    <property type="entry name" value="murD"/>
    <property type="match status" value="1"/>
</dbReference>
<dbReference type="PANTHER" id="PTHR43692">
    <property type="entry name" value="UDP-N-ACETYLMURAMOYLALANINE--D-GLUTAMATE LIGASE"/>
    <property type="match status" value="1"/>
</dbReference>
<dbReference type="PANTHER" id="PTHR43692:SF1">
    <property type="entry name" value="UDP-N-ACETYLMURAMOYLALANINE--D-GLUTAMATE LIGASE"/>
    <property type="match status" value="1"/>
</dbReference>
<dbReference type="Pfam" id="PF02875">
    <property type="entry name" value="Mur_ligase_C"/>
    <property type="match status" value="1"/>
</dbReference>
<dbReference type="Pfam" id="PF08245">
    <property type="entry name" value="Mur_ligase_M"/>
    <property type="match status" value="1"/>
</dbReference>
<dbReference type="Pfam" id="PF21799">
    <property type="entry name" value="MurD-like_N"/>
    <property type="match status" value="1"/>
</dbReference>
<dbReference type="SUPFAM" id="SSF51984">
    <property type="entry name" value="MurCD N-terminal domain"/>
    <property type="match status" value="1"/>
</dbReference>
<dbReference type="SUPFAM" id="SSF53623">
    <property type="entry name" value="MurD-like peptide ligases, catalytic domain"/>
    <property type="match status" value="1"/>
</dbReference>
<dbReference type="SUPFAM" id="SSF53244">
    <property type="entry name" value="MurD-like peptide ligases, peptide-binding domain"/>
    <property type="match status" value="1"/>
</dbReference>
<protein>
    <recommendedName>
        <fullName evidence="1">UDP-N-acetylmuramoylalanine--D-glutamate ligase</fullName>
        <ecNumber evidence="1">6.3.2.9</ecNumber>
    </recommendedName>
    <alternativeName>
        <fullName evidence="1">D-glutamic acid-adding enzyme</fullName>
    </alternativeName>
    <alternativeName>
        <fullName evidence="1">UDP-N-acetylmuramoyl-L-alanyl-D-glutamate synthetase</fullName>
    </alternativeName>
</protein>
<name>MURD_STRP6</name>